<dbReference type="EC" id="7.1.1.2"/>
<dbReference type="EMBL" id="M90483">
    <property type="protein sequence ID" value="AAA32073.1"/>
    <property type="molecule type" value="Genomic_DNA"/>
</dbReference>
<dbReference type="GO" id="GO:0005743">
    <property type="term" value="C:mitochondrial inner membrane"/>
    <property type="evidence" value="ECO:0007669"/>
    <property type="project" value="UniProtKB-SubCell"/>
</dbReference>
<dbReference type="GO" id="GO:0008137">
    <property type="term" value="F:NADH dehydrogenase (ubiquinone) activity"/>
    <property type="evidence" value="ECO:0007669"/>
    <property type="project" value="UniProtKB-EC"/>
</dbReference>
<evidence type="ECO:0000250" key="1"/>
<evidence type="ECO:0000255" key="2"/>
<evidence type="ECO:0000305" key="3"/>
<comment type="function">
    <text evidence="1">Core subunit of the mitochondrial membrane respiratory chain NADH dehydrogenase (Complex I) that is believed to belong to the minimal assembly required for catalysis. Complex I functions in the transfer of electrons from NADH to the respiratory chain. The immediate electron acceptor for the enzyme is believed to be ubiquinone (By similarity).</text>
</comment>
<comment type="catalytic activity">
    <reaction>
        <text>a ubiquinone + NADH + 5 H(+)(in) = a ubiquinol + NAD(+) + 4 H(+)(out)</text>
        <dbReference type="Rhea" id="RHEA:29091"/>
        <dbReference type="Rhea" id="RHEA-COMP:9565"/>
        <dbReference type="Rhea" id="RHEA-COMP:9566"/>
        <dbReference type="ChEBI" id="CHEBI:15378"/>
        <dbReference type="ChEBI" id="CHEBI:16389"/>
        <dbReference type="ChEBI" id="CHEBI:17976"/>
        <dbReference type="ChEBI" id="CHEBI:57540"/>
        <dbReference type="ChEBI" id="CHEBI:57945"/>
        <dbReference type="EC" id="7.1.1.2"/>
    </reaction>
</comment>
<comment type="subcellular location">
    <subcellularLocation>
        <location evidence="1">Mitochondrion inner membrane</location>
        <topology evidence="1">Multi-pass membrane protein</topology>
    </subcellularLocation>
</comment>
<comment type="similarity">
    <text evidence="3">Belongs to the complex I subunit 1 family.</text>
</comment>
<organism>
    <name type="scientific">Simulium vittatum</name>
    <name type="common">Striped black fly</name>
    <dbReference type="NCBI Taxonomy" id="7192"/>
    <lineage>
        <taxon>Eukaryota</taxon>
        <taxon>Metazoa</taxon>
        <taxon>Ecdysozoa</taxon>
        <taxon>Arthropoda</taxon>
        <taxon>Hexapoda</taxon>
        <taxon>Insecta</taxon>
        <taxon>Pterygota</taxon>
        <taxon>Neoptera</taxon>
        <taxon>Endopterygota</taxon>
        <taxon>Diptera</taxon>
        <taxon>Nematocera</taxon>
        <taxon>Chironomoidea</taxon>
        <taxon>Simuliidae</taxon>
        <taxon>Simulium</taxon>
    </lineage>
</organism>
<protein>
    <recommendedName>
        <fullName>NADH-ubiquinone oxidoreductase chain 1</fullName>
        <ecNumber>7.1.1.2</ecNumber>
    </recommendedName>
    <alternativeName>
        <fullName>NADH dehydrogenase subunit 1</fullName>
    </alternativeName>
</protein>
<sequence length="27" mass="2891">MDLIFPLVGSLLLVICVMVGVAFLTLL</sequence>
<proteinExistence type="inferred from homology"/>
<keyword id="KW-0249">Electron transport</keyword>
<keyword id="KW-0472">Membrane</keyword>
<keyword id="KW-0496">Mitochondrion</keyword>
<keyword id="KW-0999">Mitochondrion inner membrane</keyword>
<keyword id="KW-0520">NAD</keyword>
<keyword id="KW-0679">Respiratory chain</keyword>
<keyword id="KW-1278">Translocase</keyword>
<keyword id="KW-0812">Transmembrane</keyword>
<keyword id="KW-1133">Transmembrane helix</keyword>
<keyword id="KW-0813">Transport</keyword>
<keyword id="KW-0830">Ubiquinone</keyword>
<feature type="chain" id="PRO_0000117477" description="NADH-ubiquinone oxidoreductase chain 1">
    <location>
        <begin position="1"/>
        <end position="27" status="greater than"/>
    </location>
</feature>
<feature type="transmembrane region" description="Helical" evidence="2">
    <location>
        <begin position="3"/>
        <end position="23"/>
    </location>
</feature>
<feature type="non-terminal residue">
    <location>
        <position position="27"/>
    </location>
</feature>
<name>NU1M_SIMVI</name>
<reference key="1">
    <citation type="journal article" date="1992" name="J. Med. Entomol.">
        <title>Mitochondrial transfer RNA genes in a black fly, Simulium vittatum (Diptera: Simuliidae), indicate long divergence from mosquito (Diptera: Culicidae) and fruit fly (Diptera: Drosophilidae).</title>
        <authorList>
            <person name="Pruess K.P."/>
            <person name="Zhu X."/>
            <person name="Powers T.O."/>
        </authorList>
    </citation>
    <scope>NUCLEOTIDE SEQUENCE [GENOMIC DNA]</scope>
    <source>
        <strain>IIIL-1</strain>
    </source>
</reference>
<geneLocation type="mitochondrion"/>
<gene>
    <name type="primary">ND1</name>
</gene>
<accession>P50659</accession>